<feature type="chain" id="PRO_0000121869" description="tRNA pseudouridine synthase B">
    <location>
        <begin position="1"/>
        <end position="232"/>
    </location>
</feature>
<feature type="active site" description="Nucleophile" evidence="1">
    <location>
        <position position="53"/>
    </location>
</feature>
<comment type="function">
    <text evidence="1">Responsible for synthesis of pseudouridine from uracil-55 in the psi GC loop of transfer RNAs.</text>
</comment>
<comment type="catalytic activity">
    <reaction evidence="1">
        <text>uridine(55) in tRNA = pseudouridine(55) in tRNA</text>
        <dbReference type="Rhea" id="RHEA:42532"/>
        <dbReference type="Rhea" id="RHEA-COMP:10101"/>
        <dbReference type="Rhea" id="RHEA-COMP:10102"/>
        <dbReference type="ChEBI" id="CHEBI:65314"/>
        <dbReference type="ChEBI" id="CHEBI:65315"/>
        <dbReference type="EC" id="5.4.99.25"/>
    </reaction>
</comment>
<comment type="similarity">
    <text evidence="1">Belongs to the pseudouridine synthase TruB family. Type 1 subfamily.</text>
</comment>
<protein>
    <recommendedName>
        <fullName evidence="1">tRNA pseudouridine synthase B</fullName>
        <ecNumber evidence="1">5.4.99.25</ecNumber>
    </recommendedName>
    <alternativeName>
        <fullName evidence="1">tRNA pseudouridine(55) synthase</fullName>
        <shortName evidence="1">Psi55 synthase</shortName>
    </alternativeName>
    <alternativeName>
        <fullName evidence="1">tRNA pseudouridylate synthase</fullName>
    </alternativeName>
    <alternativeName>
        <fullName evidence="1">tRNA-uridine isomerase</fullName>
    </alternativeName>
</protein>
<keyword id="KW-0413">Isomerase</keyword>
<keyword id="KW-1185">Reference proteome</keyword>
<keyword id="KW-0819">tRNA processing</keyword>
<proteinExistence type="inferred from homology"/>
<reference key="1">
    <citation type="journal article" date="2002" name="Nucleic Acids Res.">
        <title>The complete genomic sequence of Mycoplasma penetrans, an intracellular bacterial pathogen in humans.</title>
        <authorList>
            <person name="Sasaki Y."/>
            <person name="Ishikawa J."/>
            <person name="Yamashita A."/>
            <person name="Oshima K."/>
            <person name="Kenri T."/>
            <person name="Furuya K."/>
            <person name="Yoshino C."/>
            <person name="Horino A."/>
            <person name="Shiba T."/>
            <person name="Sasaki T."/>
            <person name="Hattori M."/>
        </authorList>
    </citation>
    <scope>NUCLEOTIDE SEQUENCE [LARGE SCALE GENOMIC DNA]</scope>
    <source>
        <strain>HF-2</strain>
    </source>
</reference>
<organism>
    <name type="scientific">Malacoplasma penetrans (strain HF-2)</name>
    <name type="common">Mycoplasma penetrans</name>
    <dbReference type="NCBI Taxonomy" id="272633"/>
    <lineage>
        <taxon>Bacteria</taxon>
        <taxon>Bacillati</taxon>
        <taxon>Mycoplasmatota</taxon>
        <taxon>Mycoplasmoidales</taxon>
        <taxon>Mycoplasmoidaceae</taxon>
        <taxon>Malacoplasma</taxon>
    </lineage>
</organism>
<sequence length="232" mass="27030">MKQKYQYIKNTELDLKDKIFGINKPKNFSSNQVIQIIKKYYGLKKIGHAGTLDPLATGLLLVATNSKTKELNELILENKKYVAEIQFNYQTSTYDAEGEITNYTTRKIHEKTLKEELKFLNSTYWYQQPPVYSAVKIKGKKLYEYARANQEVSVPFKKVYINKVELISFDSISQKTFVSLDVSKGFYIRSFANDIGLRLNNYGYLLNLKRVEVGNYKLDQAYDFFDLVKQVN</sequence>
<gene>
    <name evidence="1" type="primary">truB</name>
    <name type="ordered locus">MYPE9280</name>
</gene>
<evidence type="ECO:0000255" key="1">
    <source>
        <dbReference type="HAMAP-Rule" id="MF_01080"/>
    </source>
</evidence>
<name>TRUB_MALP2</name>
<dbReference type="EC" id="5.4.99.25" evidence="1"/>
<dbReference type="EMBL" id="BA000026">
    <property type="protein sequence ID" value="BAC44715.1"/>
    <property type="molecule type" value="Genomic_DNA"/>
</dbReference>
<dbReference type="RefSeq" id="WP_011077744.1">
    <property type="nucleotide sequence ID" value="NC_004432.1"/>
</dbReference>
<dbReference type="SMR" id="Q8CXQ2"/>
<dbReference type="FunCoup" id="Q8CXQ2">
    <property type="interactions" value="209"/>
</dbReference>
<dbReference type="STRING" id="272633.gene:10732049"/>
<dbReference type="KEGG" id="mpe:MYPE9280"/>
<dbReference type="eggNOG" id="COG0130">
    <property type="taxonomic scope" value="Bacteria"/>
</dbReference>
<dbReference type="HOGENOM" id="CLU_032087_2_0_14"/>
<dbReference type="InParanoid" id="Q8CXQ2"/>
<dbReference type="Proteomes" id="UP000002522">
    <property type="component" value="Chromosome"/>
</dbReference>
<dbReference type="GO" id="GO:0003723">
    <property type="term" value="F:RNA binding"/>
    <property type="evidence" value="ECO:0007669"/>
    <property type="project" value="InterPro"/>
</dbReference>
<dbReference type="GO" id="GO:0160148">
    <property type="term" value="F:tRNA pseudouridine(55) synthase activity"/>
    <property type="evidence" value="ECO:0007669"/>
    <property type="project" value="UniProtKB-EC"/>
</dbReference>
<dbReference type="GO" id="GO:1990481">
    <property type="term" value="P:mRNA pseudouridine synthesis"/>
    <property type="evidence" value="ECO:0007669"/>
    <property type="project" value="TreeGrafter"/>
</dbReference>
<dbReference type="GO" id="GO:0031119">
    <property type="term" value="P:tRNA pseudouridine synthesis"/>
    <property type="evidence" value="ECO:0007669"/>
    <property type="project" value="UniProtKB-UniRule"/>
</dbReference>
<dbReference type="Gene3D" id="3.30.2350.10">
    <property type="entry name" value="Pseudouridine synthase"/>
    <property type="match status" value="1"/>
</dbReference>
<dbReference type="HAMAP" id="MF_01080">
    <property type="entry name" value="TruB_bact"/>
    <property type="match status" value="1"/>
</dbReference>
<dbReference type="InterPro" id="IPR020103">
    <property type="entry name" value="PsdUridine_synth_cat_dom_sf"/>
</dbReference>
<dbReference type="InterPro" id="IPR002501">
    <property type="entry name" value="PsdUridine_synth_N"/>
</dbReference>
<dbReference type="InterPro" id="IPR014780">
    <property type="entry name" value="tRNA_psdUridine_synth_TruB"/>
</dbReference>
<dbReference type="NCBIfam" id="TIGR00431">
    <property type="entry name" value="TruB"/>
    <property type="match status" value="1"/>
</dbReference>
<dbReference type="PANTHER" id="PTHR13767:SF2">
    <property type="entry name" value="PSEUDOURIDYLATE SYNTHASE TRUB1"/>
    <property type="match status" value="1"/>
</dbReference>
<dbReference type="PANTHER" id="PTHR13767">
    <property type="entry name" value="TRNA-PSEUDOURIDINE SYNTHASE"/>
    <property type="match status" value="1"/>
</dbReference>
<dbReference type="Pfam" id="PF01509">
    <property type="entry name" value="TruB_N"/>
    <property type="match status" value="1"/>
</dbReference>
<dbReference type="SUPFAM" id="SSF55120">
    <property type="entry name" value="Pseudouridine synthase"/>
    <property type="match status" value="1"/>
</dbReference>
<accession>Q8CXQ2</accession>